<evidence type="ECO:0000269" key="1">
    <source>
    </source>
</evidence>
<evidence type="ECO:0000305" key="2"/>
<evidence type="ECO:0007829" key="3">
    <source>
        <dbReference type="PDB" id="3FD7"/>
    </source>
</evidence>
<evidence type="ECO:0007829" key="4">
    <source>
        <dbReference type="PDB" id="3SNF"/>
    </source>
</evidence>
<organism>
    <name type="scientific">Lithobates pipiens</name>
    <name type="common">Northern leopard frog</name>
    <name type="synonym">Rana pipiens</name>
    <dbReference type="NCBI Taxonomy" id="8404"/>
    <lineage>
        <taxon>Eukaryota</taxon>
        <taxon>Metazoa</taxon>
        <taxon>Chordata</taxon>
        <taxon>Craniata</taxon>
        <taxon>Vertebrata</taxon>
        <taxon>Euteleostomi</taxon>
        <taxon>Amphibia</taxon>
        <taxon>Batrachia</taxon>
        <taxon>Anura</taxon>
        <taxon>Neobatrachia</taxon>
        <taxon>Ranoidea</taxon>
        <taxon>Ranidae</taxon>
        <taxon>Lithobates</taxon>
    </lineage>
</organism>
<keyword id="KW-0002">3D-structure</keyword>
<keyword id="KW-0903">Direct protein sequencing</keyword>
<keyword id="KW-1015">Disulfide bond</keyword>
<keyword id="KW-0255">Endonuclease</keyword>
<keyword id="KW-0378">Hydrolase</keyword>
<keyword id="KW-0540">Nuclease</keyword>
<keyword id="KW-0873">Pyrrolidone carboxylic acid</keyword>
<dbReference type="EC" id="3.1.27.-"/>
<dbReference type="PDB" id="1ONC">
    <property type="method" value="X-ray"/>
    <property type="resolution" value="1.70 A"/>
    <property type="chains" value="A=2-104"/>
</dbReference>
<dbReference type="PDB" id="1PU3">
    <property type="method" value="NMR"/>
    <property type="chains" value="A=1-104"/>
</dbReference>
<dbReference type="PDB" id="1YV4">
    <property type="method" value="X-ray"/>
    <property type="resolution" value="1.51 A"/>
    <property type="chains" value="A=1-104"/>
</dbReference>
<dbReference type="PDB" id="1YV6">
    <property type="method" value="X-ray"/>
    <property type="resolution" value="1.78 A"/>
    <property type="chains" value="A=1-104"/>
</dbReference>
<dbReference type="PDB" id="1YV7">
    <property type="method" value="X-ray"/>
    <property type="resolution" value="1.90 A"/>
    <property type="chains" value="A=1-102"/>
</dbReference>
<dbReference type="PDB" id="2GMK">
    <property type="method" value="X-ray"/>
    <property type="resolution" value="1.65 A"/>
    <property type="chains" value="A=1-104"/>
</dbReference>
<dbReference type="PDB" id="2I5S">
    <property type="method" value="X-ray"/>
    <property type="resolution" value="1.90 A"/>
    <property type="chains" value="X=1-104"/>
</dbReference>
<dbReference type="PDB" id="2KB6">
    <property type="method" value="NMR"/>
    <property type="chains" value="A=1-104"/>
</dbReference>
<dbReference type="PDB" id="2LT5">
    <property type="method" value="NMR"/>
    <property type="chains" value="A=2-104"/>
</dbReference>
<dbReference type="PDB" id="3FD7">
    <property type="method" value="X-ray"/>
    <property type="resolution" value="1.53 A"/>
    <property type="chains" value="A/B=1-104"/>
</dbReference>
<dbReference type="PDB" id="3HG6">
    <property type="method" value="X-ray"/>
    <property type="resolution" value="1.70 A"/>
    <property type="chains" value="A=2-104"/>
</dbReference>
<dbReference type="PDB" id="3PHN">
    <property type="method" value="X-ray"/>
    <property type="resolution" value="1.46 A"/>
    <property type="chains" value="A=2-104"/>
</dbReference>
<dbReference type="PDB" id="3SNF">
    <property type="method" value="X-ray"/>
    <property type="resolution" value="1.10 A"/>
    <property type="chains" value="A=1-104"/>
</dbReference>
<dbReference type="PDB" id="3U00">
    <property type="method" value="X-ray"/>
    <property type="resolution" value="1.65 A"/>
    <property type="chains" value="A=2-104"/>
</dbReference>
<dbReference type="PDB" id="3U01">
    <property type="method" value="X-ray"/>
    <property type="resolution" value="1.12 A"/>
    <property type="chains" value="A=2-104"/>
</dbReference>
<dbReference type="PDB" id="7OR6">
    <property type="method" value="X-ray"/>
    <property type="resolution" value="2.12 A"/>
    <property type="chains" value="AAA/BBB=2-104"/>
</dbReference>
<dbReference type="PDB" id="7ORD">
    <property type="method" value="X-ray"/>
    <property type="resolution" value="2.14 A"/>
    <property type="chains" value="AAA/BBB=2-104"/>
</dbReference>
<dbReference type="PDBsum" id="1ONC"/>
<dbReference type="PDBsum" id="1PU3"/>
<dbReference type="PDBsum" id="1YV4"/>
<dbReference type="PDBsum" id="1YV6"/>
<dbReference type="PDBsum" id="1YV7"/>
<dbReference type="PDBsum" id="2GMK"/>
<dbReference type="PDBsum" id="2I5S"/>
<dbReference type="PDBsum" id="2KB6"/>
<dbReference type="PDBsum" id="2LT5"/>
<dbReference type="PDBsum" id="3FD7"/>
<dbReference type="PDBsum" id="3HG6"/>
<dbReference type="PDBsum" id="3PHN"/>
<dbReference type="PDBsum" id="3SNF"/>
<dbReference type="PDBsum" id="3U00"/>
<dbReference type="PDBsum" id="3U01"/>
<dbReference type="PDBsum" id="7OR6"/>
<dbReference type="PDBsum" id="7ORD"/>
<dbReference type="BMRB" id="P22069"/>
<dbReference type="SMR" id="P22069"/>
<dbReference type="BRENDA" id="4.6.1.18">
    <property type="organism ID" value="5287"/>
</dbReference>
<dbReference type="EvolutionaryTrace" id="P22069"/>
<dbReference type="GO" id="GO:0004519">
    <property type="term" value="F:endonuclease activity"/>
    <property type="evidence" value="ECO:0007669"/>
    <property type="project" value="UniProtKB-KW"/>
</dbReference>
<dbReference type="GO" id="GO:0003676">
    <property type="term" value="F:nucleic acid binding"/>
    <property type="evidence" value="ECO:0007669"/>
    <property type="project" value="InterPro"/>
</dbReference>
<dbReference type="GO" id="GO:0004540">
    <property type="term" value="F:RNA nuclease activity"/>
    <property type="evidence" value="ECO:0007669"/>
    <property type="project" value="TreeGrafter"/>
</dbReference>
<dbReference type="GO" id="GO:0050830">
    <property type="term" value="P:defense response to Gram-positive bacterium"/>
    <property type="evidence" value="ECO:0007669"/>
    <property type="project" value="TreeGrafter"/>
</dbReference>
<dbReference type="Gene3D" id="3.10.130.10">
    <property type="entry name" value="Ribonuclease A-like domain"/>
    <property type="match status" value="1"/>
</dbReference>
<dbReference type="InterPro" id="IPR001427">
    <property type="entry name" value="RNaseA"/>
</dbReference>
<dbReference type="InterPro" id="IPR036816">
    <property type="entry name" value="RNaseA-like_dom_sf"/>
</dbReference>
<dbReference type="InterPro" id="IPR023411">
    <property type="entry name" value="RNaseA_AS"/>
</dbReference>
<dbReference type="InterPro" id="IPR023412">
    <property type="entry name" value="RNaseA_domain"/>
</dbReference>
<dbReference type="PANTHER" id="PTHR11437">
    <property type="entry name" value="RIBONUCLEASE"/>
    <property type="match status" value="1"/>
</dbReference>
<dbReference type="PANTHER" id="PTHR11437:SF66">
    <property type="entry name" value="RNASE 3"/>
    <property type="match status" value="1"/>
</dbReference>
<dbReference type="Pfam" id="PF00074">
    <property type="entry name" value="RnaseA"/>
    <property type="match status" value="1"/>
</dbReference>
<dbReference type="SMART" id="SM00092">
    <property type="entry name" value="RNAse_Pc"/>
    <property type="match status" value="1"/>
</dbReference>
<dbReference type="SUPFAM" id="SSF54076">
    <property type="entry name" value="RNase A-like"/>
    <property type="match status" value="1"/>
</dbReference>
<dbReference type="PROSITE" id="PS00127">
    <property type="entry name" value="RNASE_PANCREATIC"/>
    <property type="match status" value="1"/>
</dbReference>
<sequence length="104" mass="11845">QDWLTFQKKHITNTRDVDCDNIMSTNLFHCKDKNTFIYSRPEPVKAICKGIIASKNVLTTSEFYLSDCNVTSRPCKYKLKKSTNKFCVTCENQAPVHFVGVGSC</sequence>
<name>RNP30_LITPI</name>
<feature type="chain" id="PRO_0000057174" description="Protein P-30">
    <location>
        <begin position="1"/>
        <end position="104"/>
    </location>
</feature>
<feature type="active site" description="Proton acceptor">
    <location>
        <position position="10"/>
    </location>
</feature>
<feature type="active site" description="Proton donor">
    <location>
        <position position="97"/>
    </location>
</feature>
<feature type="binding site">
    <location>
        <begin position="31"/>
        <end position="35"/>
    </location>
    <ligand>
        <name>substrate</name>
    </ligand>
</feature>
<feature type="modified residue" description="Pyrrolidone carboxylic acid" evidence="1">
    <location>
        <position position="1"/>
    </location>
</feature>
<feature type="disulfide bond">
    <location>
        <begin position="19"/>
        <end position="68"/>
    </location>
</feature>
<feature type="disulfide bond">
    <location>
        <begin position="30"/>
        <end position="75"/>
    </location>
</feature>
<feature type="disulfide bond">
    <location>
        <begin position="48"/>
        <end position="90"/>
    </location>
</feature>
<feature type="disulfide bond">
    <location>
        <begin position="87"/>
        <end position="104"/>
    </location>
</feature>
<feature type="helix" evidence="4">
    <location>
        <begin position="3"/>
        <end position="10"/>
    </location>
</feature>
<feature type="strand" evidence="4">
    <location>
        <begin position="11"/>
        <end position="16"/>
    </location>
</feature>
<feature type="helix" evidence="4">
    <location>
        <begin position="19"/>
        <end position="22"/>
    </location>
</feature>
<feature type="strand" evidence="3">
    <location>
        <begin position="23"/>
        <end position="25"/>
    </location>
</feature>
<feature type="turn" evidence="4">
    <location>
        <begin position="26"/>
        <end position="30"/>
    </location>
</feature>
<feature type="strand" evidence="4">
    <location>
        <begin position="32"/>
        <end position="39"/>
    </location>
</feature>
<feature type="helix" evidence="4">
    <location>
        <begin position="41"/>
        <end position="45"/>
    </location>
</feature>
<feature type="helix" evidence="4">
    <location>
        <begin position="46"/>
        <end position="48"/>
    </location>
</feature>
<feature type="strand" evidence="4">
    <location>
        <begin position="55"/>
        <end position="58"/>
    </location>
</feature>
<feature type="strand" evidence="4">
    <location>
        <begin position="63"/>
        <end position="70"/>
    </location>
</feature>
<feature type="strand" evidence="4">
    <location>
        <begin position="77"/>
        <end position="84"/>
    </location>
</feature>
<feature type="strand" evidence="4">
    <location>
        <begin position="86"/>
        <end position="91"/>
    </location>
</feature>
<feature type="strand" evidence="4">
    <location>
        <begin position="94"/>
        <end position="102"/>
    </location>
</feature>
<proteinExistence type="evidence at protein level"/>
<protein>
    <recommendedName>
        <fullName>Protein P-30</fullName>
        <ecNumber>3.1.27.-</ecNumber>
    </recommendedName>
    <alternativeName>
        <fullName>Onconase</fullName>
    </alternativeName>
</protein>
<accession>P22069</accession>
<comment type="function">
    <text>Basic protein with antiproliferative/cytotoxic activity against several tumor cell lines in vitro, as well as antitumor in vivo. It exhibits a ribonuclease-like activity against high molecular weight ribosomal RNA.</text>
</comment>
<comment type="developmental stage">
    <text>Early embryos (up to four blastomere stage).</text>
</comment>
<comment type="similarity">
    <text evidence="2">Belongs to the pancreatic ribonuclease family.</text>
</comment>
<comment type="online information" name="Functional Glycomics Gateway - Glycan Binding">
    <link uri="http://www.functionalglycomics.org/glycomics/GBPServlet?&amp;operationType=view&amp;cbpId=cbp_oth_other_804"/>
    <text>Onconase</text>
</comment>
<reference key="1">
    <citation type="journal article" date="1991" name="J. Biol. Chem.">
        <title>Amino acid sequence of an anti-tumor protein from Rana pipiens oocytes and early embryos. Homology to pancreatic ribonucleases.</title>
        <authorList>
            <person name="Ardelt W."/>
            <person name="Mikulski S.M."/>
            <person name="Shogen K."/>
        </authorList>
    </citation>
    <scope>PROTEIN SEQUENCE</scope>
    <scope>PYROGLUTAMATE FORMATION AT GLN-1</scope>
    <source>
        <tissue>Embryo</tissue>
    </source>
</reference>
<reference key="2">
    <citation type="journal article" date="1994" name="J. Mol. Biol.">
        <title>Refined 1.7 A X-ray crystallographic structure of P-30 protein, an amphibian ribonuclease with anti-tumor activity.</title>
        <authorList>
            <person name="Mosimann S.C."/>
            <person name="Ardelt W."/>
            <person name="James M.N.G."/>
        </authorList>
    </citation>
    <scope>X-RAY CRYSTALLOGRAPHY (1.7 ANGSTROMS)</scope>
</reference>